<protein>
    <recommendedName>
        <fullName evidence="1">Glycerol-3-phosphate dehydrogenase [NAD(P)+]</fullName>
        <ecNumber evidence="1">1.1.1.94</ecNumber>
    </recommendedName>
    <alternativeName>
        <fullName evidence="1">NAD(P)(+)-dependent glycerol-3-phosphate dehydrogenase</fullName>
    </alternativeName>
    <alternativeName>
        <fullName evidence="1">NAD(P)H-dependent dihydroxyacetone-phosphate reductase</fullName>
    </alternativeName>
</protein>
<accession>P0A6S9</accession>
<accession>P37606</accession>
<gene>
    <name evidence="1" type="primary">gpsA</name>
    <name type="ordered locus">Z5035</name>
    <name type="ordered locus">ECs4486</name>
</gene>
<name>GPDA_ECO57</name>
<feature type="chain" id="PRO_0000137959" description="Glycerol-3-phosphate dehydrogenase [NAD(P)+]">
    <location>
        <begin position="1"/>
        <end position="339"/>
    </location>
</feature>
<feature type="active site" description="Proton acceptor" evidence="1">
    <location>
        <position position="195"/>
    </location>
</feature>
<feature type="binding site" evidence="1">
    <location>
        <position position="15"/>
    </location>
    <ligand>
        <name>NADPH</name>
        <dbReference type="ChEBI" id="CHEBI:57783"/>
    </ligand>
</feature>
<feature type="binding site" evidence="1">
    <location>
        <position position="16"/>
    </location>
    <ligand>
        <name>NADPH</name>
        <dbReference type="ChEBI" id="CHEBI:57783"/>
    </ligand>
</feature>
<feature type="binding site" evidence="1">
    <location>
        <position position="36"/>
    </location>
    <ligand>
        <name>NADPH</name>
        <dbReference type="ChEBI" id="CHEBI:57783"/>
    </ligand>
</feature>
<feature type="binding site" evidence="1">
    <location>
        <position position="110"/>
    </location>
    <ligand>
        <name>NADPH</name>
        <dbReference type="ChEBI" id="CHEBI:57783"/>
    </ligand>
</feature>
<feature type="binding site" evidence="1">
    <location>
        <position position="110"/>
    </location>
    <ligand>
        <name>sn-glycerol 3-phosphate</name>
        <dbReference type="ChEBI" id="CHEBI:57597"/>
    </ligand>
</feature>
<feature type="binding site" evidence="1">
    <location>
        <position position="139"/>
    </location>
    <ligand>
        <name>sn-glycerol 3-phosphate</name>
        <dbReference type="ChEBI" id="CHEBI:57597"/>
    </ligand>
</feature>
<feature type="binding site" evidence="1">
    <location>
        <position position="141"/>
    </location>
    <ligand>
        <name>sn-glycerol 3-phosphate</name>
        <dbReference type="ChEBI" id="CHEBI:57597"/>
    </ligand>
</feature>
<feature type="binding site" evidence="1">
    <location>
        <position position="143"/>
    </location>
    <ligand>
        <name>NADPH</name>
        <dbReference type="ChEBI" id="CHEBI:57783"/>
    </ligand>
</feature>
<feature type="binding site" evidence="1">
    <location>
        <position position="195"/>
    </location>
    <ligand>
        <name>sn-glycerol 3-phosphate</name>
        <dbReference type="ChEBI" id="CHEBI:57597"/>
    </ligand>
</feature>
<feature type="binding site" evidence="1">
    <location>
        <position position="248"/>
    </location>
    <ligand>
        <name>sn-glycerol 3-phosphate</name>
        <dbReference type="ChEBI" id="CHEBI:57597"/>
    </ligand>
</feature>
<feature type="binding site" evidence="1">
    <location>
        <position position="258"/>
    </location>
    <ligand>
        <name>sn-glycerol 3-phosphate</name>
        <dbReference type="ChEBI" id="CHEBI:57597"/>
    </ligand>
</feature>
<feature type="binding site" evidence="1">
    <location>
        <position position="259"/>
    </location>
    <ligand>
        <name>NADPH</name>
        <dbReference type="ChEBI" id="CHEBI:57783"/>
    </ligand>
</feature>
<feature type="binding site" evidence="1">
    <location>
        <position position="259"/>
    </location>
    <ligand>
        <name>sn-glycerol 3-phosphate</name>
        <dbReference type="ChEBI" id="CHEBI:57597"/>
    </ligand>
</feature>
<feature type="binding site" evidence="1">
    <location>
        <position position="260"/>
    </location>
    <ligand>
        <name>sn-glycerol 3-phosphate</name>
        <dbReference type="ChEBI" id="CHEBI:57597"/>
    </ligand>
</feature>
<feature type="binding site" evidence="1">
    <location>
        <position position="283"/>
    </location>
    <ligand>
        <name>NADPH</name>
        <dbReference type="ChEBI" id="CHEBI:57783"/>
    </ligand>
</feature>
<feature type="binding site" evidence="1">
    <location>
        <position position="285"/>
    </location>
    <ligand>
        <name>NADPH</name>
        <dbReference type="ChEBI" id="CHEBI:57783"/>
    </ligand>
</feature>
<organism>
    <name type="scientific">Escherichia coli O157:H7</name>
    <dbReference type="NCBI Taxonomy" id="83334"/>
    <lineage>
        <taxon>Bacteria</taxon>
        <taxon>Pseudomonadati</taxon>
        <taxon>Pseudomonadota</taxon>
        <taxon>Gammaproteobacteria</taxon>
        <taxon>Enterobacterales</taxon>
        <taxon>Enterobacteriaceae</taxon>
        <taxon>Escherichia</taxon>
    </lineage>
</organism>
<sequence>MNQRNASMTVIGAGSYGTALAITLARNGHEVVLWGHDPEHIATLERDRCNAAFLPDVPFPDTLHLESDLATALAASRNILVVVPSHVFGEVLRQIKPLMRPDARLVWATKGLEAETGRLLQDVAREALGDQIPLAVISGPTFAKELAAGLPTAISLASTDQTFADDLQQLLHCGKSFRVYSNPDFIGVQLGGAVKNVIAIGAGMSDGIGFGANARTALITRGLAEMSRLGAALGADPATFMGMAGLGDLVLTCTDNQSRNRRFGMMLGQGMDVQSAQEKIGQVVEGYRNTKEVRELAHRFGVEMPITEEIYQVLYCGKNAREAALTLLGRARKDERSSH</sequence>
<comment type="function">
    <text evidence="1">Catalyzes the reduction of the glycolytic intermediate dihydroxyacetone phosphate (DHAP) to sn-glycerol 3-phosphate (G3P), the key precursor for phospholipid synthesis.</text>
</comment>
<comment type="catalytic activity">
    <reaction evidence="1">
        <text>sn-glycerol 3-phosphate + NAD(+) = dihydroxyacetone phosphate + NADH + H(+)</text>
        <dbReference type="Rhea" id="RHEA:11092"/>
        <dbReference type="ChEBI" id="CHEBI:15378"/>
        <dbReference type="ChEBI" id="CHEBI:57540"/>
        <dbReference type="ChEBI" id="CHEBI:57597"/>
        <dbReference type="ChEBI" id="CHEBI:57642"/>
        <dbReference type="ChEBI" id="CHEBI:57945"/>
        <dbReference type="EC" id="1.1.1.94"/>
    </reaction>
    <physiologicalReaction direction="right-to-left" evidence="1">
        <dbReference type="Rhea" id="RHEA:11094"/>
    </physiologicalReaction>
</comment>
<comment type="catalytic activity">
    <reaction evidence="1">
        <text>sn-glycerol 3-phosphate + NADP(+) = dihydroxyacetone phosphate + NADPH + H(+)</text>
        <dbReference type="Rhea" id="RHEA:11096"/>
        <dbReference type="ChEBI" id="CHEBI:15378"/>
        <dbReference type="ChEBI" id="CHEBI:57597"/>
        <dbReference type="ChEBI" id="CHEBI:57642"/>
        <dbReference type="ChEBI" id="CHEBI:57783"/>
        <dbReference type="ChEBI" id="CHEBI:58349"/>
        <dbReference type="EC" id="1.1.1.94"/>
    </reaction>
    <physiologicalReaction direction="right-to-left" evidence="1">
        <dbReference type="Rhea" id="RHEA:11098"/>
    </physiologicalReaction>
</comment>
<comment type="pathway">
    <text evidence="1">Membrane lipid metabolism; glycerophospholipid metabolism.</text>
</comment>
<comment type="subcellular location">
    <subcellularLocation>
        <location evidence="1">Cytoplasm</location>
    </subcellularLocation>
</comment>
<comment type="similarity">
    <text evidence="1">Belongs to the NAD-dependent glycerol-3-phosphate dehydrogenase family.</text>
</comment>
<reference key="1">
    <citation type="journal article" date="2001" name="Nature">
        <title>Genome sequence of enterohaemorrhagic Escherichia coli O157:H7.</title>
        <authorList>
            <person name="Perna N.T."/>
            <person name="Plunkett G. III"/>
            <person name="Burland V."/>
            <person name="Mau B."/>
            <person name="Glasner J.D."/>
            <person name="Rose D.J."/>
            <person name="Mayhew G.F."/>
            <person name="Evans P.S."/>
            <person name="Gregor J."/>
            <person name="Kirkpatrick H.A."/>
            <person name="Posfai G."/>
            <person name="Hackett J."/>
            <person name="Klink S."/>
            <person name="Boutin A."/>
            <person name="Shao Y."/>
            <person name="Miller L."/>
            <person name="Grotbeck E.J."/>
            <person name="Davis N.W."/>
            <person name="Lim A."/>
            <person name="Dimalanta E.T."/>
            <person name="Potamousis K."/>
            <person name="Apodaca J."/>
            <person name="Anantharaman T.S."/>
            <person name="Lin J."/>
            <person name="Yen G."/>
            <person name="Schwartz D.C."/>
            <person name="Welch R.A."/>
            <person name="Blattner F.R."/>
        </authorList>
    </citation>
    <scope>NUCLEOTIDE SEQUENCE [LARGE SCALE GENOMIC DNA]</scope>
    <source>
        <strain>O157:H7 / EDL933 / ATCC 700927 / EHEC</strain>
    </source>
</reference>
<reference key="2">
    <citation type="journal article" date="2001" name="DNA Res.">
        <title>Complete genome sequence of enterohemorrhagic Escherichia coli O157:H7 and genomic comparison with a laboratory strain K-12.</title>
        <authorList>
            <person name="Hayashi T."/>
            <person name="Makino K."/>
            <person name="Ohnishi M."/>
            <person name="Kurokawa K."/>
            <person name="Ishii K."/>
            <person name="Yokoyama K."/>
            <person name="Han C.-G."/>
            <person name="Ohtsubo E."/>
            <person name="Nakayama K."/>
            <person name="Murata T."/>
            <person name="Tanaka M."/>
            <person name="Tobe T."/>
            <person name="Iida T."/>
            <person name="Takami H."/>
            <person name="Honda T."/>
            <person name="Sasakawa C."/>
            <person name="Ogasawara N."/>
            <person name="Yasunaga T."/>
            <person name="Kuhara S."/>
            <person name="Shiba T."/>
            <person name="Hattori M."/>
            <person name="Shinagawa H."/>
        </authorList>
    </citation>
    <scope>NUCLEOTIDE SEQUENCE [LARGE SCALE GENOMIC DNA]</scope>
    <source>
        <strain>O157:H7 / Sakai / RIMD 0509952 / EHEC</strain>
    </source>
</reference>
<proteinExistence type="inferred from homology"/>
<evidence type="ECO:0000255" key="1">
    <source>
        <dbReference type="HAMAP-Rule" id="MF_00394"/>
    </source>
</evidence>
<dbReference type="EC" id="1.1.1.94" evidence="1"/>
<dbReference type="EMBL" id="AE005174">
    <property type="protein sequence ID" value="AAG58755.1"/>
    <property type="molecule type" value="Genomic_DNA"/>
</dbReference>
<dbReference type="EMBL" id="BA000007">
    <property type="protein sequence ID" value="BAB37909.1"/>
    <property type="molecule type" value="Genomic_DNA"/>
</dbReference>
<dbReference type="PIR" id="F91189">
    <property type="entry name" value="F91189"/>
</dbReference>
<dbReference type="PIR" id="G86036">
    <property type="entry name" value="G86036"/>
</dbReference>
<dbReference type="RefSeq" id="NP_312513.1">
    <property type="nucleotide sequence ID" value="NC_002695.1"/>
</dbReference>
<dbReference type="RefSeq" id="WP_001076194.1">
    <property type="nucleotide sequence ID" value="NZ_SWKA01000005.1"/>
</dbReference>
<dbReference type="SMR" id="P0A6S9"/>
<dbReference type="STRING" id="155864.Z5035"/>
<dbReference type="GeneID" id="915571"/>
<dbReference type="GeneID" id="93778322"/>
<dbReference type="KEGG" id="ece:Z5035"/>
<dbReference type="KEGG" id="ecs:ECs_4486"/>
<dbReference type="PATRIC" id="fig|386585.9.peg.4701"/>
<dbReference type="eggNOG" id="COG0240">
    <property type="taxonomic scope" value="Bacteria"/>
</dbReference>
<dbReference type="HOGENOM" id="CLU_033449_0_2_6"/>
<dbReference type="OMA" id="NRMFGNM"/>
<dbReference type="UniPathway" id="UPA00940"/>
<dbReference type="Proteomes" id="UP000000558">
    <property type="component" value="Chromosome"/>
</dbReference>
<dbReference type="Proteomes" id="UP000002519">
    <property type="component" value="Chromosome"/>
</dbReference>
<dbReference type="GO" id="GO:0005829">
    <property type="term" value="C:cytosol"/>
    <property type="evidence" value="ECO:0007669"/>
    <property type="project" value="TreeGrafter"/>
</dbReference>
<dbReference type="GO" id="GO:0047952">
    <property type="term" value="F:glycerol-3-phosphate dehydrogenase [NAD(P)+] activity"/>
    <property type="evidence" value="ECO:0007669"/>
    <property type="project" value="UniProtKB-UniRule"/>
</dbReference>
<dbReference type="GO" id="GO:0051287">
    <property type="term" value="F:NAD binding"/>
    <property type="evidence" value="ECO:0007669"/>
    <property type="project" value="InterPro"/>
</dbReference>
<dbReference type="GO" id="GO:0005975">
    <property type="term" value="P:carbohydrate metabolic process"/>
    <property type="evidence" value="ECO:0007669"/>
    <property type="project" value="InterPro"/>
</dbReference>
<dbReference type="GO" id="GO:0046167">
    <property type="term" value="P:glycerol-3-phosphate biosynthetic process"/>
    <property type="evidence" value="ECO:0007669"/>
    <property type="project" value="UniProtKB-UniRule"/>
</dbReference>
<dbReference type="GO" id="GO:0046168">
    <property type="term" value="P:glycerol-3-phosphate catabolic process"/>
    <property type="evidence" value="ECO:0007669"/>
    <property type="project" value="InterPro"/>
</dbReference>
<dbReference type="GO" id="GO:0046474">
    <property type="term" value="P:glycerophospholipid biosynthetic process"/>
    <property type="evidence" value="ECO:0007669"/>
    <property type="project" value="TreeGrafter"/>
</dbReference>
<dbReference type="FunFam" id="1.10.1040.10:FF:000001">
    <property type="entry name" value="Glycerol-3-phosphate dehydrogenase [NAD(P)+]"/>
    <property type="match status" value="1"/>
</dbReference>
<dbReference type="FunFam" id="3.40.50.720:FF:000019">
    <property type="entry name" value="Glycerol-3-phosphate dehydrogenase [NAD(P)+]"/>
    <property type="match status" value="1"/>
</dbReference>
<dbReference type="Gene3D" id="1.10.1040.10">
    <property type="entry name" value="N-(1-d-carboxylethyl)-l-norvaline Dehydrogenase, domain 2"/>
    <property type="match status" value="1"/>
</dbReference>
<dbReference type="Gene3D" id="3.40.50.720">
    <property type="entry name" value="NAD(P)-binding Rossmann-like Domain"/>
    <property type="match status" value="1"/>
</dbReference>
<dbReference type="HAMAP" id="MF_00394">
    <property type="entry name" value="NAD_Glyc3P_dehydrog"/>
    <property type="match status" value="1"/>
</dbReference>
<dbReference type="InterPro" id="IPR008927">
    <property type="entry name" value="6-PGluconate_DH-like_C_sf"/>
</dbReference>
<dbReference type="InterPro" id="IPR013328">
    <property type="entry name" value="6PGD_dom2"/>
</dbReference>
<dbReference type="InterPro" id="IPR006168">
    <property type="entry name" value="G3P_DH_NAD-dep"/>
</dbReference>
<dbReference type="InterPro" id="IPR006109">
    <property type="entry name" value="G3P_DH_NAD-dep_C"/>
</dbReference>
<dbReference type="InterPro" id="IPR011128">
    <property type="entry name" value="G3P_DH_NAD-dep_N"/>
</dbReference>
<dbReference type="InterPro" id="IPR036291">
    <property type="entry name" value="NAD(P)-bd_dom_sf"/>
</dbReference>
<dbReference type="NCBIfam" id="NF000939">
    <property type="entry name" value="PRK00094.1-1"/>
    <property type="match status" value="1"/>
</dbReference>
<dbReference type="NCBIfam" id="NF000940">
    <property type="entry name" value="PRK00094.1-2"/>
    <property type="match status" value="1"/>
</dbReference>
<dbReference type="NCBIfam" id="NF000942">
    <property type="entry name" value="PRK00094.1-4"/>
    <property type="match status" value="1"/>
</dbReference>
<dbReference type="PANTHER" id="PTHR11728">
    <property type="entry name" value="GLYCEROL-3-PHOSPHATE DEHYDROGENASE"/>
    <property type="match status" value="1"/>
</dbReference>
<dbReference type="PANTHER" id="PTHR11728:SF1">
    <property type="entry name" value="GLYCEROL-3-PHOSPHATE DEHYDROGENASE [NAD(+)] 2, CHLOROPLASTIC"/>
    <property type="match status" value="1"/>
</dbReference>
<dbReference type="Pfam" id="PF07479">
    <property type="entry name" value="NAD_Gly3P_dh_C"/>
    <property type="match status" value="1"/>
</dbReference>
<dbReference type="Pfam" id="PF01210">
    <property type="entry name" value="NAD_Gly3P_dh_N"/>
    <property type="match status" value="1"/>
</dbReference>
<dbReference type="PIRSF" id="PIRSF000114">
    <property type="entry name" value="Glycerol-3-P_dh"/>
    <property type="match status" value="1"/>
</dbReference>
<dbReference type="PRINTS" id="PR00077">
    <property type="entry name" value="GPDHDRGNASE"/>
</dbReference>
<dbReference type="SUPFAM" id="SSF48179">
    <property type="entry name" value="6-phosphogluconate dehydrogenase C-terminal domain-like"/>
    <property type="match status" value="1"/>
</dbReference>
<dbReference type="SUPFAM" id="SSF51735">
    <property type="entry name" value="NAD(P)-binding Rossmann-fold domains"/>
    <property type="match status" value="1"/>
</dbReference>
<dbReference type="PROSITE" id="PS00957">
    <property type="entry name" value="NAD_G3PDH"/>
    <property type="match status" value="1"/>
</dbReference>
<keyword id="KW-0963">Cytoplasm</keyword>
<keyword id="KW-0444">Lipid biosynthesis</keyword>
<keyword id="KW-0443">Lipid metabolism</keyword>
<keyword id="KW-0520">NAD</keyword>
<keyword id="KW-0521">NADP</keyword>
<keyword id="KW-0547">Nucleotide-binding</keyword>
<keyword id="KW-0560">Oxidoreductase</keyword>
<keyword id="KW-0594">Phospholipid biosynthesis</keyword>
<keyword id="KW-1208">Phospholipid metabolism</keyword>
<keyword id="KW-1185">Reference proteome</keyword>